<gene>
    <name evidence="1" type="primary">argS</name>
    <name type="ordered locus">Wbm0205</name>
</gene>
<accession>Q5GT78</accession>
<dbReference type="EC" id="6.1.1.19" evidence="1"/>
<dbReference type="EMBL" id="AE017321">
    <property type="protein sequence ID" value="AAW70796.1"/>
    <property type="molecule type" value="Genomic_DNA"/>
</dbReference>
<dbReference type="RefSeq" id="WP_011256406.1">
    <property type="nucleotide sequence ID" value="NC_006833.1"/>
</dbReference>
<dbReference type="SMR" id="Q5GT78"/>
<dbReference type="STRING" id="292805.Wbm0205"/>
<dbReference type="KEGG" id="wbm:Wbm0205"/>
<dbReference type="eggNOG" id="COG0018">
    <property type="taxonomic scope" value="Bacteria"/>
</dbReference>
<dbReference type="HOGENOM" id="CLU_006406_0_1_5"/>
<dbReference type="Proteomes" id="UP000000534">
    <property type="component" value="Chromosome"/>
</dbReference>
<dbReference type="GO" id="GO:0005737">
    <property type="term" value="C:cytoplasm"/>
    <property type="evidence" value="ECO:0007669"/>
    <property type="project" value="UniProtKB-SubCell"/>
</dbReference>
<dbReference type="GO" id="GO:0004814">
    <property type="term" value="F:arginine-tRNA ligase activity"/>
    <property type="evidence" value="ECO:0007669"/>
    <property type="project" value="UniProtKB-UniRule"/>
</dbReference>
<dbReference type="GO" id="GO:0005524">
    <property type="term" value="F:ATP binding"/>
    <property type="evidence" value="ECO:0007669"/>
    <property type="project" value="UniProtKB-UniRule"/>
</dbReference>
<dbReference type="GO" id="GO:0006420">
    <property type="term" value="P:arginyl-tRNA aminoacylation"/>
    <property type="evidence" value="ECO:0007669"/>
    <property type="project" value="UniProtKB-UniRule"/>
</dbReference>
<dbReference type="CDD" id="cd00671">
    <property type="entry name" value="ArgRS_core"/>
    <property type="match status" value="1"/>
</dbReference>
<dbReference type="Gene3D" id="3.30.1360.70">
    <property type="entry name" value="Arginyl tRNA synthetase N-terminal domain"/>
    <property type="match status" value="1"/>
</dbReference>
<dbReference type="Gene3D" id="3.40.50.620">
    <property type="entry name" value="HUPs"/>
    <property type="match status" value="1"/>
</dbReference>
<dbReference type="Gene3D" id="1.10.730.10">
    <property type="entry name" value="Isoleucyl-tRNA Synthetase, Domain 1"/>
    <property type="match status" value="1"/>
</dbReference>
<dbReference type="HAMAP" id="MF_00123">
    <property type="entry name" value="Arg_tRNA_synth"/>
    <property type="match status" value="1"/>
</dbReference>
<dbReference type="InterPro" id="IPR001412">
    <property type="entry name" value="aa-tRNA-synth_I_CS"/>
</dbReference>
<dbReference type="InterPro" id="IPR001278">
    <property type="entry name" value="Arg-tRNA-ligase"/>
</dbReference>
<dbReference type="InterPro" id="IPR005148">
    <property type="entry name" value="Arg-tRNA-synth_N"/>
</dbReference>
<dbReference type="InterPro" id="IPR036695">
    <property type="entry name" value="Arg-tRNA-synth_N_sf"/>
</dbReference>
<dbReference type="InterPro" id="IPR035684">
    <property type="entry name" value="ArgRS_core"/>
</dbReference>
<dbReference type="InterPro" id="IPR008909">
    <property type="entry name" value="DALR_anticod-bd"/>
</dbReference>
<dbReference type="InterPro" id="IPR014729">
    <property type="entry name" value="Rossmann-like_a/b/a_fold"/>
</dbReference>
<dbReference type="InterPro" id="IPR009080">
    <property type="entry name" value="tRNAsynth_Ia_anticodon-bd"/>
</dbReference>
<dbReference type="NCBIfam" id="TIGR00456">
    <property type="entry name" value="argS"/>
    <property type="match status" value="1"/>
</dbReference>
<dbReference type="PANTHER" id="PTHR11956:SF5">
    <property type="entry name" value="ARGININE--TRNA LIGASE, CYTOPLASMIC"/>
    <property type="match status" value="1"/>
</dbReference>
<dbReference type="PANTHER" id="PTHR11956">
    <property type="entry name" value="ARGINYL-TRNA SYNTHETASE"/>
    <property type="match status" value="1"/>
</dbReference>
<dbReference type="Pfam" id="PF03485">
    <property type="entry name" value="Arg_tRNA_synt_N"/>
    <property type="match status" value="1"/>
</dbReference>
<dbReference type="Pfam" id="PF05746">
    <property type="entry name" value="DALR_1"/>
    <property type="match status" value="1"/>
</dbReference>
<dbReference type="Pfam" id="PF00750">
    <property type="entry name" value="tRNA-synt_1d"/>
    <property type="match status" value="1"/>
</dbReference>
<dbReference type="PRINTS" id="PR01038">
    <property type="entry name" value="TRNASYNTHARG"/>
</dbReference>
<dbReference type="SMART" id="SM01016">
    <property type="entry name" value="Arg_tRNA_synt_N"/>
    <property type="match status" value="1"/>
</dbReference>
<dbReference type="SMART" id="SM00836">
    <property type="entry name" value="DALR_1"/>
    <property type="match status" value="1"/>
</dbReference>
<dbReference type="SUPFAM" id="SSF47323">
    <property type="entry name" value="Anticodon-binding domain of a subclass of class I aminoacyl-tRNA synthetases"/>
    <property type="match status" value="1"/>
</dbReference>
<dbReference type="SUPFAM" id="SSF55190">
    <property type="entry name" value="Arginyl-tRNA synthetase (ArgRS), N-terminal 'additional' domain"/>
    <property type="match status" value="1"/>
</dbReference>
<dbReference type="SUPFAM" id="SSF52374">
    <property type="entry name" value="Nucleotidylyl transferase"/>
    <property type="match status" value="1"/>
</dbReference>
<dbReference type="PROSITE" id="PS00178">
    <property type="entry name" value="AA_TRNA_LIGASE_I"/>
    <property type="match status" value="1"/>
</dbReference>
<organism>
    <name type="scientific">Wolbachia sp. subsp. Brugia malayi (strain TRS)</name>
    <dbReference type="NCBI Taxonomy" id="292805"/>
    <lineage>
        <taxon>Bacteria</taxon>
        <taxon>Pseudomonadati</taxon>
        <taxon>Pseudomonadota</taxon>
        <taxon>Alphaproteobacteria</taxon>
        <taxon>Rickettsiales</taxon>
        <taxon>Anaplasmataceae</taxon>
        <taxon>Wolbachieae</taxon>
        <taxon>Wolbachia</taxon>
    </lineage>
</organism>
<reference key="1">
    <citation type="journal article" date="2005" name="PLoS Biol.">
        <title>The Wolbachia genome of Brugia malayi: endosymbiont evolution within a human pathogenic nematode.</title>
        <authorList>
            <person name="Foster J."/>
            <person name="Ganatra M."/>
            <person name="Kamal I."/>
            <person name="Ware J."/>
            <person name="Makarova K."/>
            <person name="Ivanova N."/>
            <person name="Bhattacharyya A."/>
            <person name="Kapatral V."/>
            <person name="Kumar S."/>
            <person name="Posfai J."/>
            <person name="Vincze T."/>
            <person name="Ingram J."/>
            <person name="Moran L."/>
            <person name="Lapidus A."/>
            <person name="Omelchenko M."/>
            <person name="Kyrpides N."/>
            <person name="Ghedin E."/>
            <person name="Wang S."/>
            <person name="Goltsman E."/>
            <person name="Joukov V."/>
            <person name="Ostrovskaya O."/>
            <person name="Tsukerman K."/>
            <person name="Mazur M."/>
            <person name="Comb D."/>
            <person name="Koonin E."/>
            <person name="Slatko B."/>
        </authorList>
    </citation>
    <scope>NUCLEOTIDE SEQUENCE [LARGE SCALE GENOMIC DNA]</scope>
    <source>
        <strain>TRS</strain>
    </source>
</reference>
<proteinExistence type="inferred from homology"/>
<protein>
    <recommendedName>
        <fullName evidence="1">Arginine--tRNA ligase</fullName>
        <ecNumber evidence="1">6.1.1.19</ecNumber>
    </recommendedName>
    <alternativeName>
        <fullName evidence="1">Arginyl-tRNA synthetase</fullName>
        <shortName evidence="1">ArgRS</shortName>
    </alternativeName>
</protein>
<name>SYR_WOLTR</name>
<evidence type="ECO:0000255" key="1">
    <source>
        <dbReference type="HAMAP-Rule" id="MF_00123"/>
    </source>
</evidence>
<comment type="catalytic activity">
    <reaction evidence="1">
        <text>tRNA(Arg) + L-arginine + ATP = L-arginyl-tRNA(Arg) + AMP + diphosphate</text>
        <dbReference type="Rhea" id="RHEA:20301"/>
        <dbReference type="Rhea" id="RHEA-COMP:9658"/>
        <dbReference type="Rhea" id="RHEA-COMP:9673"/>
        <dbReference type="ChEBI" id="CHEBI:30616"/>
        <dbReference type="ChEBI" id="CHEBI:32682"/>
        <dbReference type="ChEBI" id="CHEBI:33019"/>
        <dbReference type="ChEBI" id="CHEBI:78442"/>
        <dbReference type="ChEBI" id="CHEBI:78513"/>
        <dbReference type="ChEBI" id="CHEBI:456215"/>
        <dbReference type="EC" id="6.1.1.19"/>
    </reaction>
</comment>
<comment type="subunit">
    <text evidence="1">Monomer.</text>
</comment>
<comment type="subcellular location">
    <subcellularLocation>
        <location evidence="1">Cytoplasm</location>
    </subcellularLocation>
</comment>
<comment type="similarity">
    <text evidence="1">Belongs to the class-I aminoacyl-tRNA synthetase family.</text>
</comment>
<sequence length="565" mass="64200">MNIFKRISSLILSKLDKLKQGVSSVTNFIVEPPSNRAHGDIYTNIAMVLAKHEKKKPVEIAEVLAKEFALFDEIARVEIAGPGFINMHLKIEVWHGILEQINELKTEFGTLNIGNNQAINVEFVSANPTGPLHIGHARGAVFGDVLTNLLKKVGYRVTKEYYINDAGAQIDTLVRSVYLRYKEALGEKISIEKGLYPGEYLKPIGEELAKKYGRELLEKQDNRVIREYTLSSILELIKEGMNLLGVSHDVFTSEYELQKSGKIEKSIKLLSDKGLVYEGYLEKPKSKESENWTSRKEMLFRSTEFGDDVDRALKKEDGSWTYFASDIAYHFDKISRGFNNMIVALGSDHGGYIKRLKAVISALSDNQAKIEVKLHNVVNFFENGKPVKMSKRSGNFLTVRDVVEEVGRDITRFIMLTRKNDMVLDFDFTKVKEQSKDNPIFYVQYAHVRAHSLMRNAPKELPKANPSLLKTNGELFLIKTLAKWPDVVETAARLCEPHRITFYLLEVAEAFHILWGYGKSDLNMRFILEDNPNLTAARMFLVQALVHVIASGLSMFNIEPLEEMK</sequence>
<feature type="chain" id="PRO_0000242121" description="Arginine--tRNA ligase">
    <location>
        <begin position="1"/>
        <end position="565"/>
    </location>
</feature>
<feature type="short sequence motif" description="'HIGH' region">
    <location>
        <begin position="126"/>
        <end position="136"/>
    </location>
</feature>
<keyword id="KW-0030">Aminoacyl-tRNA synthetase</keyword>
<keyword id="KW-0067">ATP-binding</keyword>
<keyword id="KW-0963">Cytoplasm</keyword>
<keyword id="KW-0436">Ligase</keyword>
<keyword id="KW-0547">Nucleotide-binding</keyword>
<keyword id="KW-0648">Protein biosynthesis</keyword>
<keyword id="KW-1185">Reference proteome</keyword>